<protein>
    <recommendedName>
        <fullName>Histone H2A.V</fullName>
    </recommendedName>
    <alternativeName>
        <fullName>H2A.F/Z</fullName>
    </alternativeName>
    <alternativeName>
        <fullName evidence="9">H2A.Z variant histone 2</fullName>
    </alternativeName>
</protein>
<proteinExistence type="evidence at protein level"/>
<comment type="function">
    <text evidence="1">Variant histone H2A which replaces conventional H2A in a subset of nucleosomes. Nucleosomes wrap and compact DNA into chromatin, limiting DNA accessibility to the cellular machineries which require DNA as a template. Histones thereby play a central role in transcription regulation, DNA repair, DNA replication and chromosomal stability. DNA accessibility is regulated via a complex set of post-translational modifications of histones, also called histone code, and nucleosome remodeling. May be involved in the formation of constitutive heterochromatin. May be required for chromosome segregation during cell division (By similarity).</text>
</comment>
<comment type="subunit">
    <text evidence="1">The nucleosome is a histone octamer containing two molecules each of H2A, H2B, H3 and H4 assembled in one H3-H4 heterotetramer and two H2A-H2B heterodimers. The octamer wraps approximately 147 bp of DNA. H2A or its variant H2AZ2 forms a heterodimer with H2B (By similarity).</text>
</comment>
<comment type="subcellular location">
    <subcellularLocation>
        <location evidence="1">Nucleus</location>
    </subcellularLocation>
    <subcellularLocation>
        <location evidence="1">Chromosome</location>
    </subcellularLocation>
</comment>
<comment type="alternative products">
    <event type="alternative splicing"/>
    <isoform>
        <id>Q71UI9-1</id>
        <name>1</name>
        <sequence type="displayed"/>
    </isoform>
    <isoform>
        <id>Q71UI9-2</id>
        <name>2</name>
        <sequence type="described" ref="VSP_042855"/>
    </isoform>
    <isoform>
        <id>Q71UI9-3</id>
        <name>3</name>
        <sequence type="described" ref="VSP_044633"/>
    </isoform>
    <isoform>
        <id>Q71UI9-4</id>
        <name>4</name>
        <sequence type="described" ref="VSP_045232"/>
    </isoform>
    <isoform>
        <id>Q71UI9-5</id>
        <name>5</name>
        <sequence type="described" ref="VSP_046783"/>
    </isoform>
</comment>
<comment type="PTM">
    <text evidence="1">Monoubiquitination of Lys-122 gives a specific tag for epigenetic transcriptional repression.</text>
</comment>
<comment type="PTM">
    <text evidence="1">Acetylated on Lys-5, Lys-8 and Lys-12 during interphase. Acetylation disappears at mitosis (By similarity).</text>
</comment>
<comment type="mass spectrometry">
    <text>Monoisotopic, not modified.</text>
</comment>
<comment type="similarity">
    <text evidence="8">Belongs to the histone H2A family.</text>
</comment>
<comment type="sequence caution" evidence="8">
    <conflict type="erroneous initiation">
        <sequence resource="EMBL-CDS" id="BAD92238"/>
    </conflict>
</comment>
<organism>
    <name type="scientific">Homo sapiens</name>
    <name type="common">Human</name>
    <dbReference type="NCBI Taxonomy" id="9606"/>
    <lineage>
        <taxon>Eukaryota</taxon>
        <taxon>Metazoa</taxon>
        <taxon>Chordata</taxon>
        <taxon>Craniata</taxon>
        <taxon>Vertebrata</taxon>
        <taxon>Euteleostomi</taxon>
        <taxon>Mammalia</taxon>
        <taxon>Eutheria</taxon>
        <taxon>Euarchontoglires</taxon>
        <taxon>Primates</taxon>
        <taxon>Haplorrhini</taxon>
        <taxon>Catarrhini</taxon>
        <taxon>Hominidae</taxon>
        <taxon>Homo</taxon>
    </lineage>
</organism>
<reference key="1">
    <citation type="submission" date="1998-07" db="EMBL/GenBank/DDBJ databases">
        <title>Novel human member of the variant histone family.</title>
        <authorList>
            <person name="Groitl P."/>
            <person name="Wolf H."/>
            <person name="Niller H.H."/>
        </authorList>
    </citation>
    <scope>NUCLEOTIDE SEQUENCE [MRNA] (ISOFORM 1)</scope>
</reference>
<reference key="2">
    <citation type="journal article" date="2004" name="Nat. Genet.">
        <title>Complete sequencing and characterization of 21,243 full-length human cDNAs.</title>
        <authorList>
            <person name="Ota T."/>
            <person name="Suzuki Y."/>
            <person name="Nishikawa T."/>
            <person name="Otsuki T."/>
            <person name="Sugiyama T."/>
            <person name="Irie R."/>
            <person name="Wakamatsu A."/>
            <person name="Hayashi K."/>
            <person name="Sato H."/>
            <person name="Nagai K."/>
            <person name="Kimura K."/>
            <person name="Makita H."/>
            <person name="Sekine M."/>
            <person name="Obayashi M."/>
            <person name="Nishi T."/>
            <person name="Shibahara T."/>
            <person name="Tanaka T."/>
            <person name="Ishii S."/>
            <person name="Yamamoto J."/>
            <person name="Saito K."/>
            <person name="Kawai Y."/>
            <person name="Isono Y."/>
            <person name="Nakamura Y."/>
            <person name="Nagahari K."/>
            <person name="Murakami K."/>
            <person name="Yasuda T."/>
            <person name="Iwayanagi T."/>
            <person name="Wagatsuma M."/>
            <person name="Shiratori A."/>
            <person name="Sudo H."/>
            <person name="Hosoiri T."/>
            <person name="Kaku Y."/>
            <person name="Kodaira H."/>
            <person name="Kondo H."/>
            <person name="Sugawara M."/>
            <person name="Takahashi M."/>
            <person name="Kanda K."/>
            <person name="Yokoi T."/>
            <person name="Furuya T."/>
            <person name="Kikkawa E."/>
            <person name="Omura Y."/>
            <person name="Abe K."/>
            <person name="Kamihara K."/>
            <person name="Katsuta N."/>
            <person name="Sato K."/>
            <person name="Tanikawa M."/>
            <person name="Yamazaki M."/>
            <person name="Ninomiya K."/>
            <person name="Ishibashi T."/>
            <person name="Yamashita H."/>
            <person name="Murakawa K."/>
            <person name="Fujimori K."/>
            <person name="Tanai H."/>
            <person name="Kimata M."/>
            <person name="Watanabe M."/>
            <person name="Hiraoka S."/>
            <person name="Chiba Y."/>
            <person name="Ishida S."/>
            <person name="Ono Y."/>
            <person name="Takiguchi S."/>
            <person name="Watanabe S."/>
            <person name="Yosida M."/>
            <person name="Hotuta T."/>
            <person name="Kusano J."/>
            <person name="Kanehori K."/>
            <person name="Takahashi-Fujii A."/>
            <person name="Hara H."/>
            <person name="Tanase T.-O."/>
            <person name="Nomura Y."/>
            <person name="Togiya S."/>
            <person name="Komai F."/>
            <person name="Hara R."/>
            <person name="Takeuchi K."/>
            <person name="Arita M."/>
            <person name="Imose N."/>
            <person name="Musashino K."/>
            <person name="Yuuki H."/>
            <person name="Oshima A."/>
            <person name="Sasaki N."/>
            <person name="Aotsuka S."/>
            <person name="Yoshikawa Y."/>
            <person name="Matsunawa H."/>
            <person name="Ichihara T."/>
            <person name="Shiohata N."/>
            <person name="Sano S."/>
            <person name="Moriya S."/>
            <person name="Momiyama H."/>
            <person name="Satoh N."/>
            <person name="Takami S."/>
            <person name="Terashima Y."/>
            <person name="Suzuki O."/>
            <person name="Nakagawa S."/>
            <person name="Senoh A."/>
            <person name="Mizoguchi H."/>
            <person name="Goto Y."/>
            <person name="Shimizu F."/>
            <person name="Wakebe H."/>
            <person name="Hishigaki H."/>
            <person name="Watanabe T."/>
            <person name="Sugiyama A."/>
            <person name="Takemoto M."/>
            <person name="Kawakami B."/>
            <person name="Yamazaki M."/>
            <person name="Watanabe K."/>
            <person name="Kumagai A."/>
            <person name="Itakura S."/>
            <person name="Fukuzumi Y."/>
            <person name="Fujimori Y."/>
            <person name="Komiyama M."/>
            <person name="Tashiro H."/>
            <person name="Tanigami A."/>
            <person name="Fujiwara T."/>
            <person name="Ono T."/>
            <person name="Yamada K."/>
            <person name="Fujii Y."/>
            <person name="Ozaki K."/>
            <person name="Hirao M."/>
            <person name="Ohmori Y."/>
            <person name="Kawabata A."/>
            <person name="Hikiji T."/>
            <person name="Kobatake N."/>
            <person name="Inagaki H."/>
            <person name="Ikema Y."/>
            <person name="Okamoto S."/>
            <person name="Okitani R."/>
            <person name="Kawakami T."/>
            <person name="Noguchi S."/>
            <person name="Itoh T."/>
            <person name="Shigeta K."/>
            <person name="Senba T."/>
            <person name="Matsumura K."/>
            <person name="Nakajima Y."/>
            <person name="Mizuno T."/>
            <person name="Morinaga M."/>
            <person name="Sasaki M."/>
            <person name="Togashi T."/>
            <person name="Oyama M."/>
            <person name="Hata H."/>
            <person name="Watanabe M."/>
            <person name="Komatsu T."/>
            <person name="Mizushima-Sugano J."/>
            <person name="Satoh T."/>
            <person name="Shirai Y."/>
            <person name="Takahashi Y."/>
            <person name="Nakagawa K."/>
            <person name="Okumura K."/>
            <person name="Nagase T."/>
            <person name="Nomura N."/>
            <person name="Kikuchi H."/>
            <person name="Masuho Y."/>
            <person name="Yamashita R."/>
            <person name="Nakai K."/>
            <person name="Yada T."/>
            <person name="Nakamura Y."/>
            <person name="Ohara O."/>
            <person name="Isogai T."/>
            <person name="Sugano S."/>
        </authorList>
    </citation>
    <scope>NUCLEOTIDE SEQUENCE [LARGE SCALE MRNA] (ISOFORM 2)</scope>
</reference>
<reference key="3">
    <citation type="submission" date="2005-03" db="EMBL/GenBank/DDBJ databases">
        <authorList>
            <person name="Totoki Y."/>
            <person name="Toyoda A."/>
            <person name="Takeda T."/>
            <person name="Sakaki Y."/>
            <person name="Tanaka A."/>
            <person name="Yokoyama S."/>
            <person name="Ohara O."/>
            <person name="Nagase T."/>
            <person name="Kikuno R.F."/>
        </authorList>
    </citation>
    <scope>NUCLEOTIDE SEQUENCE [LARGE SCALE MRNA] (ISOFORM 1)</scope>
    <source>
        <tissue>Brain</tissue>
    </source>
</reference>
<reference key="4">
    <citation type="journal article" date="2003" name="Nature">
        <title>The DNA sequence of human chromosome 7.</title>
        <authorList>
            <person name="Hillier L.W."/>
            <person name="Fulton R.S."/>
            <person name="Fulton L.A."/>
            <person name="Graves T.A."/>
            <person name="Pepin K.H."/>
            <person name="Wagner-McPherson C."/>
            <person name="Layman D."/>
            <person name="Maas J."/>
            <person name="Jaeger S."/>
            <person name="Walker R."/>
            <person name="Wylie K."/>
            <person name="Sekhon M."/>
            <person name="Becker M.C."/>
            <person name="O'Laughlin M.D."/>
            <person name="Schaller M.E."/>
            <person name="Fewell G.A."/>
            <person name="Delehaunty K.D."/>
            <person name="Miner T.L."/>
            <person name="Nash W.E."/>
            <person name="Cordes M."/>
            <person name="Du H."/>
            <person name="Sun H."/>
            <person name="Edwards J."/>
            <person name="Bradshaw-Cordum H."/>
            <person name="Ali J."/>
            <person name="Andrews S."/>
            <person name="Isak A."/>
            <person name="Vanbrunt A."/>
            <person name="Nguyen C."/>
            <person name="Du F."/>
            <person name="Lamar B."/>
            <person name="Courtney L."/>
            <person name="Kalicki J."/>
            <person name="Ozersky P."/>
            <person name="Bielicki L."/>
            <person name="Scott K."/>
            <person name="Holmes A."/>
            <person name="Harkins R."/>
            <person name="Harris A."/>
            <person name="Strong C.M."/>
            <person name="Hou S."/>
            <person name="Tomlinson C."/>
            <person name="Dauphin-Kohlberg S."/>
            <person name="Kozlowicz-Reilly A."/>
            <person name="Leonard S."/>
            <person name="Rohlfing T."/>
            <person name="Rock S.M."/>
            <person name="Tin-Wollam A.-M."/>
            <person name="Abbott A."/>
            <person name="Minx P."/>
            <person name="Maupin R."/>
            <person name="Strowmatt C."/>
            <person name="Latreille P."/>
            <person name="Miller N."/>
            <person name="Johnson D."/>
            <person name="Murray J."/>
            <person name="Woessner J.P."/>
            <person name="Wendl M.C."/>
            <person name="Yang S.-P."/>
            <person name="Schultz B.R."/>
            <person name="Wallis J.W."/>
            <person name="Spieth J."/>
            <person name="Bieri T.A."/>
            <person name="Nelson J.O."/>
            <person name="Berkowicz N."/>
            <person name="Wohldmann P.E."/>
            <person name="Cook L.L."/>
            <person name="Hickenbotham M.T."/>
            <person name="Eldred J."/>
            <person name="Williams D."/>
            <person name="Bedell J.A."/>
            <person name="Mardis E.R."/>
            <person name="Clifton S.W."/>
            <person name="Chissoe S.L."/>
            <person name="Marra M.A."/>
            <person name="Raymond C."/>
            <person name="Haugen E."/>
            <person name="Gillett W."/>
            <person name="Zhou Y."/>
            <person name="James R."/>
            <person name="Phelps K."/>
            <person name="Iadanoto S."/>
            <person name="Bubb K."/>
            <person name="Simms E."/>
            <person name="Levy R."/>
            <person name="Clendenning J."/>
            <person name="Kaul R."/>
            <person name="Kent W.J."/>
            <person name="Furey T.S."/>
            <person name="Baertsch R.A."/>
            <person name="Brent M.R."/>
            <person name="Keibler E."/>
            <person name="Flicek P."/>
            <person name="Bork P."/>
            <person name="Suyama M."/>
            <person name="Bailey J.A."/>
            <person name="Portnoy M.E."/>
            <person name="Torrents D."/>
            <person name="Chinwalla A.T."/>
            <person name="Gish W.R."/>
            <person name="Eddy S.R."/>
            <person name="McPherson J.D."/>
            <person name="Olson M.V."/>
            <person name="Eichler E.E."/>
            <person name="Green E.D."/>
            <person name="Waterston R.H."/>
            <person name="Wilson R.K."/>
        </authorList>
    </citation>
    <scope>NUCLEOTIDE SEQUENCE [LARGE SCALE GENOMIC DNA]</scope>
</reference>
<reference key="5">
    <citation type="submission" date="2005-09" db="EMBL/GenBank/DDBJ databases">
        <authorList>
            <person name="Mural R.J."/>
            <person name="Istrail S."/>
            <person name="Sutton G."/>
            <person name="Florea L."/>
            <person name="Halpern A.L."/>
            <person name="Mobarry C.M."/>
            <person name="Lippert R."/>
            <person name="Walenz B."/>
            <person name="Shatkay H."/>
            <person name="Dew I."/>
            <person name="Miller J.R."/>
            <person name="Flanigan M.J."/>
            <person name="Edwards N.J."/>
            <person name="Bolanos R."/>
            <person name="Fasulo D."/>
            <person name="Halldorsson B.V."/>
            <person name="Hannenhalli S."/>
            <person name="Turner R."/>
            <person name="Yooseph S."/>
            <person name="Lu F."/>
            <person name="Nusskern D.R."/>
            <person name="Shue B.C."/>
            <person name="Zheng X.H."/>
            <person name="Zhong F."/>
            <person name="Delcher A.L."/>
            <person name="Huson D.H."/>
            <person name="Kravitz S.A."/>
            <person name="Mouchard L."/>
            <person name="Reinert K."/>
            <person name="Remington K.A."/>
            <person name="Clark A.G."/>
            <person name="Waterman M.S."/>
            <person name="Eichler E.E."/>
            <person name="Adams M.D."/>
            <person name="Hunkapiller M.W."/>
            <person name="Myers E.W."/>
            <person name="Venter J.C."/>
        </authorList>
    </citation>
    <scope>NUCLEOTIDE SEQUENCE [LARGE SCALE GENOMIC DNA]</scope>
</reference>
<reference key="6">
    <citation type="journal article" date="2004" name="Genome Res.">
        <title>The status, quality, and expansion of the NIH full-length cDNA project: the Mammalian Gene Collection (MGC).</title>
        <authorList>
            <consortium name="The MGC Project Team"/>
        </authorList>
    </citation>
    <scope>NUCLEOTIDE SEQUENCE [LARGE SCALE MRNA] (ISOFORMS 1; 3 AND 4)</scope>
    <source>
        <tissue>Kidney</tissue>
        <tissue>Ovarian adenocarcinoma</tissue>
        <tissue>Prostatic carcinoma</tissue>
        <tissue>Skin</tissue>
        <tissue>Uterus</tissue>
    </source>
</reference>
<reference key="7">
    <citation type="journal article" date="2006" name="J. Proteome Res.">
        <title>Precise characterization of human histones in the H2A gene family by top down mass spectrometry.</title>
        <authorList>
            <person name="Boyne M.T. II"/>
            <person name="Pesavento J.J."/>
            <person name="Mizzen C.A."/>
            <person name="Kelleher N.L."/>
        </authorList>
    </citation>
    <scope>MASS SPECTROMETRY</scope>
</reference>
<evidence type="ECO:0000250" key="1"/>
<evidence type="ECO:0000250" key="2">
    <source>
        <dbReference type="UniProtKB" id="P0C0S5"/>
    </source>
</evidence>
<evidence type="ECO:0000250" key="3">
    <source>
        <dbReference type="UniProtKB" id="Q3THW5"/>
    </source>
</evidence>
<evidence type="ECO:0000256" key="4">
    <source>
        <dbReference type="SAM" id="MobiDB-lite"/>
    </source>
</evidence>
<evidence type="ECO:0000269" key="5">
    <source>
    </source>
</evidence>
<evidence type="ECO:0000303" key="6">
    <source>
    </source>
</evidence>
<evidence type="ECO:0000303" key="7">
    <source>
    </source>
</evidence>
<evidence type="ECO:0000305" key="8"/>
<evidence type="ECO:0000312" key="9">
    <source>
        <dbReference type="HGNC" id="HGNC:20664"/>
    </source>
</evidence>
<evidence type="ECO:0007829" key="10">
    <source>
        <dbReference type="PDB" id="3WAA"/>
    </source>
</evidence>
<feature type="initiator methionine" description="Removed" evidence="8">
    <location>
        <position position="1"/>
    </location>
</feature>
<feature type="chain" id="PRO_0000239068" description="Histone H2A.V">
    <location>
        <begin position="2"/>
        <end position="128"/>
    </location>
</feature>
<feature type="region of interest" description="Disordered" evidence="4">
    <location>
        <begin position="1"/>
        <end position="23"/>
    </location>
</feature>
<feature type="compositionally biased region" description="Basic and acidic residues" evidence="4">
    <location>
        <begin position="1"/>
        <end position="12"/>
    </location>
</feature>
<feature type="modified residue" description="N6-acetyllysine" evidence="3">
    <location>
        <position position="5"/>
    </location>
</feature>
<feature type="modified residue" description="N6-acetyllysine" evidence="3">
    <location>
        <position position="8"/>
    </location>
</feature>
<feature type="modified residue" description="N6-acetyllysine" evidence="3">
    <location>
        <position position="12"/>
    </location>
</feature>
<feature type="modified residue" description="N6-lactoyllysine; alternate" evidence="2">
    <location>
        <position position="12"/>
    </location>
</feature>
<feature type="modified residue" description="N6-lactoyllysine; alternate" evidence="2">
    <location>
        <position position="14"/>
    </location>
</feature>
<feature type="modified residue" description="N6-lactoyllysine" evidence="2">
    <location>
        <position position="116"/>
    </location>
</feature>
<feature type="splice variant" id="VSP_045232" description="In isoform 4." evidence="7">
    <original>MAGGKAGKDSGKAKAKAVSRSQRAGLQ</original>
    <variation>M</variation>
    <location>
        <begin position="1"/>
        <end position="27"/>
    </location>
</feature>
<feature type="splice variant" id="VSP_044633" description="In isoform 3." evidence="7">
    <location>
        <begin position="28"/>
        <end position="65"/>
    </location>
</feature>
<feature type="splice variant" id="VSP_046783" description="In isoform 5." evidence="8">
    <location>
        <begin position="67"/>
        <end position="128"/>
    </location>
</feature>
<feature type="splice variant" id="VSP_042855" description="In isoform 2." evidence="6">
    <original>GVIPHIHKSLIGKKGQQKTA</original>
    <variation>EKRRCS</variation>
    <location>
        <begin position="109"/>
        <end position="128"/>
    </location>
</feature>
<feature type="sequence variant" id="VAR_059312" description="In dbSNP:rs1802437.">
    <original>Q</original>
    <variation>R</variation>
    <location>
        <position position="125"/>
    </location>
</feature>
<feature type="helix" evidence="10">
    <location>
        <begin position="20"/>
        <end position="23"/>
    </location>
</feature>
<feature type="helix" evidence="10">
    <location>
        <begin position="30"/>
        <end position="38"/>
    </location>
</feature>
<feature type="helix" evidence="10">
    <location>
        <begin position="49"/>
        <end position="75"/>
    </location>
</feature>
<feature type="turn" evidence="10">
    <location>
        <begin position="76"/>
        <end position="78"/>
    </location>
</feature>
<feature type="strand" evidence="10">
    <location>
        <begin position="80"/>
        <end position="82"/>
    </location>
</feature>
<feature type="helix" evidence="10">
    <location>
        <begin position="84"/>
        <end position="93"/>
    </location>
</feature>
<feature type="helix" evidence="10">
    <location>
        <begin position="95"/>
        <end position="100"/>
    </location>
</feature>
<feature type="strand" evidence="10">
    <location>
        <begin position="103"/>
        <end position="105"/>
    </location>
</feature>
<feature type="helix" evidence="10">
    <location>
        <begin position="116"/>
        <end position="118"/>
    </location>
</feature>
<gene>
    <name evidence="9" type="primary">H2AZ2</name>
    <name evidence="9" type="synonym">H2AFV</name>
    <name type="synonym">H2AV</name>
</gene>
<sequence>MAGGKAGKDSGKAKAKAVSRSQRAGLQFPVGRIHRHLKTRTTSHGRVGATAAVYSAAILEYLTAEVLELAGNASKDLKVKRITPRHLQLAIRGDEELDSLIKATIAGGGVIPHIHKSLIGKKGQQKTA</sequence>
<keyword id="KW-0002">3D-structure</keyword>
<keyword id="KW-0007">Acetylation</keyword>
<keyword id="KW-0025">Alternative splicing</keyword>
<keyword id="KW-0158">Chromosome</keyword>
<keyword id="KW-0238">DNA-binding</keyword>
<keyword id="KW-0544">Nucleosome core</keyword>
<keyword id="KW-0539">Nucleus</keyword>
<keyword id="KW-1267">Proteomics identification</keyword>
<keyword id="KW-1185">Reference proteome</keyword>
<keyword id="KW-0832">Ubl conjugation</keyword>
<name>H2AV_HUMAN</name>
<accession>Q71UI9</accession>
<accession>A6NFA8</accession>
<accession>A6NKY0</accession>
<accession>A6NN01</accession>
<accession>A8MQC5</accession>
<accession>Q59GV8</accession>
<accession>Q6PK98</accession>
<dbReference type="EMBL" id="AF081192">
    <property type="protein sequence ID" value="AAC31938.1"/>
    <property type="molecule type" value="mRNA"/>
</dbReference>
<dbReference type="EMBL" id="AK023973">
    <property type="protein sequence ID" value="BAG51243.1"/>
    <property type="molecule type" value="mRNA"/>
</dbReference>
<dbReference type="EMBL" id="AB209001">
    <property type="protein sequence ID" value="BAD92238.1"/>
    <property type="status" value="ALT_INIT"/>
    <property type="molecule type" value="mRNA"/>
</dbReference>
<dbReference type="EMBL" id="AC004854">
    <property type="protein sequence ID" value="AAS00365.1"/>
    <property type="molecule type" value="Genomic_DNA"/>
</dbReference>
<dbReference type="EMBL" id="CH471128">
    <property type="protein sequence ID" value="EAW61075.1"/>
    <property type="molecule type" value="Genomic_DNA"/>
</dbReference>
<dbReference type="EMBL" id="CH471128">
    <property type="protein sequence ID" value="EAW61077.1"/>
    <property type="molecule type" value="Genomic_DNA"/>
</dbReference>
<dbReference type="EMBL" id="BC000098">
    <property type="protein sequence ID" value="AAH00098.1"/>
    <property type="molecule type" value="mRNA"/>
</dbReference>
<dbReference type="EMBL" id="BC004274">
    <property type="protein sequence ID" value="AAH04274.3"/>
    <property type="molecule type" value="mRNA"/>
</dbReference>
<dbReference type="EMBL" id="BC014885">
    <property type="protein sequence ID" value="AAH14885.1"/>
    <property type="molecule type" value="mRNA"/>
</dbReference>
<dbReference type="EMBL" id="BC070169">
    <property type="protein sequence ID" value="AAH70169.1"/>
    <property type="molecule type" value="mRNA"/>
</dbReference>
<dbReference type="EMBL" id="BE742590">
    <property type="status" value="NOT_ANNOTATED_CDS"/>
    <property type="molecule type" value="mRNA"/>
</dbReference>
<dbReference type="EMBL" id="BU543626">
    <property type="status" value="NOT_ANNOTATED_CDS"/>
    <property type="molecule type" value="mRNA"/>
</dbReference>
<dbReference type="CCDS" id="CCDS47581.1">
    <molecule id="Q71UI9-5"/>
</dbReference>
<dbReference type="CCDS" id="CCDS5495.1">
    <molecule id="Q71UI9-2"/>
</dbReference>
<dbReference type="CCDS" id="CCDS5496.1">
    <molecule id="Q71UI9-1"/>
</dbReference>
<dbReference type="CCDS" id="CCDS5497.1">
    <molecule id="Q71UI9-4"/>
</dbReference>
<dbReference type="CCDS" id="CCDS5498.1">
    <molecule id="Q71UI9-3"/>
</dbReference>
<dbReference type="RefSeq" id="NP_036544.1">
    <molecule id="Q71UI9-1"/>
    <property type="nucleotide sequence ID" value="NM_012412.5"/>
</dbReference>
<dbReference type="RefSeq" id="NP_619541.1">
    <molecule id="Q71UI9-2"/>
    <property type="nucleotide sequence ID" value="NM_138635.3"/>
</dbReference>
<dbReference type="RefSeq" id="NP_958844.1">
    <molecule id="Q71UI9-4"/>
    <property type="nucleotide sequence ID" value="NM_201436.3"/>
</dbReference>
<dbReference type="RefSeq" id="NP_958924.1">
    <molecule id="Q71UI9-5"/>
    <property type="nucleotide sequence ID" value="NM_201516.3"/>
</dbReference>
<dbReference type="RefSeq" id="NP_958925.1">
    <molecule id="Q71UI9-3"/>
    <property type="nucleotide sequence ID" value="NM_201517.3"/>
</dbReference>
<dbReference type="PDB" id="3WAA">
    <property type="method" value="X-ray"/>
    <property type="resolution" value="3.20 A"/>
    <property type="chains" value="C/G=1-128"/>
</dbReference>
<dbReference type="PDB" id="6M4D">
    <property type="method" value="EM"/>
    <property type="resolution" value="4.40 A"/>
    <property type="chains" value="C/G=1-108"/>
</dbReference>
<dbReference type="PDBsum" id="3WAA"/>
<dbReference type="PDBsum" id="6M4D"/>
<dbReference type="EMDB" id="EMD-30076"/>
<dbReference type="SMR" id="Q71UI9"/>
<dbReference type="BioGRID" id="125150">
    <property type="interactions" value="175"/>
</dbReference>
<dbReference type="ComplexPortal" id="CPX-5671">
    <property type="entry name" value="Nucleosome, variant H3.1-H2A.V-H2B.1"/>
</dbReference>
<dbReference type="CORUM" id="Q71UI9"/>
<dbReference type="FunCoup" id="Q71UI9">
    <property type="interactions" value="2412"/>
</dbReference>
<dbReference type="IntAct" id="Q71UI9">
    <property type="interactions" value="40"/>
</dbReference>
<dbReference type="MINT" id="Q71UI9"/>
<dbReference type="STRING" id="9606.ENSP00000308405"/>
<dbReference type="GlyGen" id="Q71UI9">
    <property type="glycosylation" value="1 site, 1 O-linked glycan (1 site)"/>
</dbReference>
<dbReference type="iPTMnet" id="Q71UI9"/>
<dbReference type="PhosphoSitePlus" id="Q71UI9"/>
<dbReference type="SwissPalm" id="Q71UI9"/>
<dbReference type="BioMuta" id="H2AFV"/>
<dbReference type="DMDM" id="74749787"/>
<dbReference type="jPOST" id="Q71UI9"/>
<dbReference type="MassIVE" id="Q71UI9"/>
<dbReference type="PaxDb" id="9606-ENSP00000308405"/>
<dbReference type="PeptideAtlas" id="Q71UI9"/>
<dbReference type="ProteomicsDB" id="1035"/>
<dbReference type="ProteomicsDB" id="1437"/>
<dbReference type="ProteomicsDB" id="1947"/>
<dbReference type="ProteomicsDB" id="68632">
    <molecule id="Q71UI9-1"/>
</dbReference>
<dbReference type="ProteomicsDB" id="68633">
    <molecule id="Q71UI9-2"/>
</dbReference>
<dbReference type="Pumba" id="Q71UI9"/>
<dbReference type="TopDownProteomics" id="Q71UI9-1">
    <molecule id="Q71UI9-1"/>
</dbReference>
<dbReference type="TopDownProteomics" id="Q71UI9-3">
    <molecule id="Q71UI9-3"/>
</dbReference>
<dbReference type="TopDownProteomics" id="Q71UI9-4">
    <molecule id="Q71UI9-4"/>
</dbReference>
<dbReference type="Antibodypedia" id="27370">
    <property type="antibodies" value="95 antibodies from 17 providers"/>
</dbReference>
<dbReference type="DNASU" id="94239"/>
<dbReference type="Ensembl" id="ENST00000222690.10">
    <molecule id="Q71UI9-2"/>
    <property type="protein sequence ID" value="ENSP00000222690.6"/>
    <property type="gene ID" value="ENSG00000105968.19"/>
</dbReference>
<dbReference type="Ensembl" id="ENST00000308153.9">
    <molecule id="Q71UI9-1"/>
    <property type="protein sequence ID" value="ENSP00000308405.5"/>
    <property type="gene ID" value="ENSG00000105968.19"/>
</dbReference>
<dbReference type="Ensembl" id="ENST00000349299.7">
    <molecule id="Q71UI9-3"/>
    <property type="protein sequence ID" value="ENSP00000342714.3"/>
    <property type="gene ID" value="ENSG00000105968.19"/>
</dbReference>
<dbReference type="Ensembl" id="ENST00000350771.7">
    <molecule id="Q71UI9-4"/>
    <property type="protein sequence ID" value="ENSP00000340708.3"/>
    <property type="gene ID" value="ENSG00000105968.19"/>
</dbReference>
<dbReference type="Ensembl" id="ENST00000381124.9">
    <molecule id="Q71UI9-5"/>
    <property type="protein sequence ID" value="ENSP00000370516.5"/>
    <property type="gene ID" value="ENSG00000105968.19"/>
</dbReference>
<dbReference type="GeneID" id="94239"/>
<dbReference type="KEGG" id="hsa:94239"/>
<dbReference type="MANE-Select" id="ENST00000308153.9">
    <property type="protein sequence ID" value="ENSP00000308405.5"/>
    <property type="RefSeq nucleotide sequence ID" value="NM_012412.5"/>
    <property type="RefSeq protein sequence ID" value="NP_036544.1"/>
</dbReference>
<dbReference type="UCSC" id="uc003tlz.3">
    <molecule id="Q71UI9-1"/>
    <property type="organism name" value="human"/>
</dbReference>
<dbReference type="AGR" id="HGNC:20664"/>
<dbReference type="CTD" id="94239"/>
<dbReference type="DisGeNET" id="94239"/>
<dbReference type="GeneCards" id="H2AZ2"/>
<dbReference type="HGNC" id="HGNC:20664">
    <property type="gene designation" value="H2AZ2"/>
</dbReference>
<dbReference type="HPA" id="ENSG00000105968">
    <property type="expression patterns" value="Low tissue specificity"/>
</dbReference>
<dbReference type="MIM" id="620008">
    <property type="type" value="gene"/>
</dbReference>
<dbReference type="neXtProt" id="NX_Q71UI9"/>
<dbReference type="OpenTargets" id="ENSG00000105968"/>
<dbReference type="VEuPathDB" id="HostDB:ENSG00000105968"/>
<dbReference type="eggNOG" id="KOG1757">
    <property type="taxonomic scope" value="Eukaryota"/>
</dbReference>
<dbReference type="GeneTree" id="ENSGT00900000140979"/>
<dbReference type="HOGENOM" id="CLU_062828_2_4_1"/>
<dbReference type="InParanoid" id="Q71UI9"/>
<dbReference type="OMA" id="MNKKGAP"/>
<dbReference type="OrthoDB" id="9529939at2759"/>
<dbReference type="PAN-GO" id="Q71UI9">
    <property type="GO annotations" value="1 GO annotation based on evolutionary models"/>
</dbReference>
<dbReference type="PhylomeDB" id="Q71UI9"/>
<dbReference type="TreeFam" id="TF354232"/>
<dbReference type="PathwayCommons" id="Q71UI9"/>
<dbReference type="Reactome" id="R-HSA-110328">
    <property type="pathway name" value="Recognition and association of DNA glycosylase with site containing an affected pyrimidine"/>
</dbReference>
<dbReference type="Reactome" id="R-HSA-110329">
    <property type="pathway name" value="Cleavage of the damaged pyrimidine"/>
</dbReference>
<dbReference type="Reactome" id="R-HSA-110330">
    <property type="pathway name" value="Recognition and association of DNA glycosylase with site containing an affected purine"/>
</dbReference>
<dbReference type="Reactome" id="R-HSA-110331">
    <property type="pathway name" value="Cleavage of the damaged purine"/>
</dbReference>
<dbReference type="Reactome" id="R-HSA-1221632">
    <property type="pathway name" value="Meiotic synapsis"/>
</dbReference>
<dbReference type="Reactome" id="R-HSA-171306">
    <property type="pathway name" value="Packaging Of Telomere Ends"/>
</dbReference>
<dbReference type="Reactome" id="R-HSA-1912408">
    <property type="pathway name" value="Pre-NOTCH Transcription and Translation"/>
</dbReference>
<dbReference type="Reactome" id="R-HSA-201722">
    <property type="pathway name" value="Formation of the beta-catenin:TCF transactivating complex"/>
</dbReference>
<dbReference type="Reactome" id="R-HSA-212300">
    <property type="pathway name" value="PRC2 methylates histones and DNA"/>
</dbReference>
<dbReference type="Reactome" id="R-HSA-2299718">
    <property type="pathway name" value="Condensation of Prophase Chromosomes"/>
</dbReference>
<dbReference type="Reactome" id="R-HSA-2559580">
    <property type="pathway name" value="Oxidative Stress Induced Senescence"/>
</dbReference>
<dbReference type="Reactome" id="R-HSA-2559582">
    <property type="pathway name" value="Senescence-Associated Secretory Phenotype (SASP)"/>
</dbReference>
<dbReference type="Reactome" id="R-HSA-2559586">
    <property type="pathway name" value="DNA Damage/Telomere Stress Induced Senescence"/>
</dbReference>
<dbReference type="Reactome" id="R-HSA-3214858">
    <property type="pathway name" value="RMTs methylate histone arginines"/>
</dbReference>
<dbReference type="Reactome" id="R-HSA-427359">
    <property type="pathway name" value="SIRT1 negatively regulates rRNA expression"/>
</dbReference>
<dbReference type="Reactome" id="R-HSA-427389">
    <property type="pathway name" value="ERCC6 (CSB) and EHMT2 (G9a) positively regulate rRNA expression"/>
</dbReference>
<dbReference type="Reactome" id="R-HSA-427413">
    <property type="pathway name" value="NoRC negatively regulates rRNA expression"/>
</dbReference>
<dbReference type="Reactome" id="R-HSA-5250924">
    <property type="pathway name" value="B-WICH complex positively regulates rRNA expression"/>
</dbReference>
<dbReference type="Reactome" id="R-HSA-5334118">
    <property type="pathway name" value="DNA methylation"/>
</dbReference>
<dbReference type="Reactome" id="R-HSA-5578749">
    <property type="pathway name" value="Transcriptional regulation by small RNAs"/>
</dbReference>
<dbReference type="Reactome" id="R-HSA-5617472">
    <property type="pathway name" value="Activation of anterior HOX genes in hindbrain development during early embryogenesis"/>
</dbReference>
<dbReference type="Reactome" id="R-HSA-5625886">
    <property type="pathway name" value="Activated PKN1 stimulates transcription of AR (androgen receptor) regulated genes KLK2 and KLK3"/>
</dbReference>
<dbReference type="Reactome" id="R-HSA-606279">
    <property type="pathway name" value="Deposition of new CENPA-containing nucleosomes at the centromere"/>
</dbReference>
<dbReference type="Reactome" id="R-HSA-68616">
    <property type="pathway name" value="Assembly of the ORC complex at the origin of replication"/>
</dbReference>
<dbReference type="Reactome" id="R-HSA-73728">
    <property type="pathway name" value="RNA Polymerase I Promoter Opening"/>
</dbReference>
<dbReference type="Reactome" id="R-HSA-73772">
    <property type="pathway name" value="RNA Polymerase I Promoter Escape"/>
</dbReference>
<dbReference type="Reactome" id="R-HSA-8936459">
    <property type="pathway name" value="RUNX1 regulates genes involved in megakaryocyte differentiation and platelet function"/>
</dbReference>
<dbReference type="Reactome" id="R-HSA-8939236">
    <property type="pathway name" value="RUNX1 regulates transcription of genes involved in differentiation of HSCs"/>
</dbReference>
<dbReference type="Reactome" id="R-HSA-9018519">
    <property type="pathway name" value="Estrogen-dependent gene expression"/>
</dbReference>
<dbReference type="Reactome" id="R-HSA-912446">
    <property type="pathway name" value="Meiotic recombination"/>
</dbReference>
<dbReference type="Reactome" id="R-HSA-9616222">
    <property type="pathway name" value="Transcriptional regulation of granulopoiesis"/>
</dbReference>
<dbReference type="Reactome" id="R-HSA-9670095">
    <property type="pathway name" value="Inhibition of DNA recombination at telomere"/>
</dbReference>
<dbReference type="Reactome" id="R-HSA-9710421">
    <property type="pathway name" value="Defective pyroptosis"/>
</dbReference>
<dbReference type="Reactome" id="R-HSA-9821002">
    <property type="pathway name" value="Chromatin modifications during the maternal to zygotic transition (MZT)"/>
</dbReference>
<dbReference type="Reactome" id="R-HSA-9841922">
    <property type="pathway name" value="MLL4 and MLL3 complexes regulate expression of PPARG target genes in adipogenesis and hepatic steatosis"/>
</dbReference>
<dbReference type="Reactome" id="R-HSA-9843940">
    <property type="pathway name" value="Regulation of endogenous retroelements by KRAB-ZFP proteins"/>
</dbReference>
<dbReference type="Reactome" id="R-HSA-9843970">
    <property type="pathway name" value="Regulation of endogenous retroelements by the Human Silencing Hub (HUSH) complex"/>
</dbReference>
<dbReference type="Reactome" id="R-HSA-9845323">
    <property type="pathway name" value="Regulation of endogenous retroelements by Piwi-interacting RNAs (piRNAs)"/>
</dbReference>
<dbReference type="SignaLink" id="Q71UI9"/>
<dbReference type="SIGNOR" id="Q71UI9"/>
<dbReference type="BioGRID-ORCS" id="94239">
    <property type="hits" value="11 hits in 1156 CRISPR screens"/>
</dbReference>
<dbReference type="CD-CODE" id="91857CE7">
    <property type="entry name" value="Nucleolus"/>
</dbReference>
<dbReference type="CD-CODE" id="DEE660B4">
    <property type="entry name" value="Stress granule"/>
</dbReference>
<dbReference type="ChiTaRS" id="H2AFV">
    <property type="organism name" value="human"/>
</dbReference>
<dbReference type="EvolutionaryTrace" id="Q71UI9"/>
<dbReference type="GeneWiki" id="H2AFV"/>
<dbReference type="GenomeRNAi" id="94239"/>
<dbReference type="Pharos" id="Q71UI9">
    <property type="development level" value="Tbio"/>
</dbReference>
<dbReference type="PRO" id="PR:Q71UI9"/>
<dbReference type="Proteomes" id="UP000005640">
    <property type="component" value="Chromosome 7"/>
</dbReference>
<dbReference type="RNAct" id="Q71UI9">
    <property type="molecule type" value="protein"/>
</dbReference>
<dbReference type="Bgee" id="ENSG00000105968">
    <property type="expression patterns" value="Expressed in ventricular zone and 207 other cell types or tissues"/>
</dbReference>
<dbReference type="ExpressionAtlas" id="Q71UI9">
    <property type="expression patterns" value="baseline and differential"/>
</dbReference>
<dbReference type="GO" id="GO:0070062">
    <property type="term" value="C:extracellular exosome"/>
    <property type="evidence" value="ECO:0007005"/>
    <property type="project" value="UniProtKB"/>
</dbReference>
<dbReference type="GO" id="GO:0000786">
    <property type="term" value="C:nucleosome"/>
    <property type="evidence" value="ECO:0000353"/>
    <property type="project" value="ComplexPortal"/>
</dbReference>
<dbReference type="GO" id="GO:0005634">
    <property type="term" value="C:nucleus"/>
    <property type="evidence" value="ECO:0000314"/>
    <property type="project" value="UniProtKB"/>
</dbReference>
<dbReference type="GO" id="GO:0003677">
    <property type="term" value="F:DNA binding"/>
    <property type="evidence" value="ECO:0007669"/>
    <property type="project" value="UniProtKB-KW"/>
</dbReference>
<dbReference type="GO" id="GO:0060090">
    <property type="term" value="F:molecular adaptor activity"/>
    <property type="evidence" value="ECO:0000269"/>
    <property type="project" value="DisProt"/>
</dbReference>
<dbReference type="GO" id="GO:0046982">
    <property type="term" value="F:protein heterodimerization activity"/>
    <property type="evidence" value="ECO:0007669"/>
    <property type="project" value="InterPro"/>
</dbReference>
<dbReference type="GO" id="GO:0030527">
    <property type="term" value="F:structural constituent of chromatin"/>
    <property type="evidence" value="ECO:0000318"/>
    <property type="project" value="GO_Central"/>
</dbReference>
<dbReference type="GO" id="GO:0006325">
    <property type="term" value="P:chromatin organization"/>
    <property type="evidence" value="ECO:0000303"/>
    <property type="project" value="ComplexPortal"/>
</dbReference>
<dbReference type="GO" id="GO:0031507">
    <property type="term" value="P:heterochromatin formation"/>
    <property type="evidence" value="ECO:0000318"/>
    <property type="project" value="GO_Central"/>
</dbReference>
<dbReference type="CDD" id="cd00074">
    <property type="entry name" value="HFD_H2A"/>
    <property type="match status" value="1"/>
</dbReference>
<dbReference type="DisProt" id="DP02301"/>
<dbReference type="FunFam" id="1.10.20.10:FF:000005">
    <property type="entry name" value="Histone H2A"/>
    <property type="match status" value="1"/>
</dbReference>
<dbReference type="Gene3D" id="1.10.20.10">
    <property type="entry name" value="Histone, subunit A"/>
    <property type="match status" value="1"/>
</dbReference>
<dbReference type="IDEAL" id="IID00614"/>
<dbReference type="InterPro" id="IPR009072">
    <property type="entry name" value="Histone-fold"/>
</dbReference>
<dbReference type="InterPro" id="IPR002119">
    <property type="entry name" value="Histone_H2A"/>
</dbReference>
<dbReference type="InterPro" id="IPR007125">
    <property type="entry name" value="Histone_H2A/H2B/H3"/>
</dbReference>
<dbReference type="InterPro" id="IPR032454">
    <property type="entry name" value="Histone_H2A_C"/>
</dbReference>
<dbReference type="InterPro" id="IPR032458">
    <property type="entry name" value="Histone_H2A_CS"/>
</dbReference>
<dbReference type="PANTHER" id="PTHR23430">
    <property type="entry name" value="HISTONE H2A"/>
    <property type="match status" value="1"/>
</dbReference>
<dbReference type="Pfam" id="PF00125">
    <property type="entry name" value="Histone"/>
    <property type="match status" value="1"/>
</dbReference>
<dbReference type="Pfam" id="PF16211">
    <property type="entry name" value="Histone_H2A_C"/>
    <property type="match status" value="1"/>
</dbReference>
<dbReference type="PRINTS" id="PR00620">
    <property type="entry name" value="HISTONEH2A"/>
</dbReference>
<dbReference type="SMART" id="SM00414">
    <property type="entry name" value="H2A"/>
    <property type="match status" value="1"/>
</dbReference>
<dbReference type="SUPFAM" id="SSF47113">
    <property type="entry name" value="Histone-fold"/>
    <property type="match status" value="1"/>
</dbReference>
<dbReference type="PROSITE" id="PS00046">
    <property type="entry name" value="HISTONE_H2A"/>
    <property type="match status" value="1"/>
</dbReference>